<reference key="1">
    <citation type="journal article" date="2004" name="Nature">
        <title>Genome evolution in yeasts.</title>
        <authorList>
            <person name="Dujon B."/>
            <person name="Sherman D."/>
            <person name="Fischer G."/>
            <person name="Durrens P."/>
            <person name="Casaregola S."/>
            <person name="Lafontaine I."/>
            <person name="de Montigny J."/>
            <person name="Marck C."/>
            <person name="Neuveglise C."/>
            <person name="Talla E."/>
            <person name="Goffard N."/>
            <person name="Frangeul L."/>
            <person name="Aigle M."/>
            <person name="Anthouard V."/>
            <person name="Babour A."/>
            <person name="Barbe V."/>
            <person name="Barnay S."/>
            <person name="Blanchin S."/>
            <person name="Beckerich J.-M."/>
            <person name="Beyne E."/>
            <person name="Bleykasten C."/>
            <person name="Boisrame A."/>
            <person name="Boyer J."/>
            <person name="Cattolico L."/>
            <person name="Confanioleri F."/>
            <person name="de Daruvar A."/>
            <person name="Despons L."/>
            <person name="Fabre E."/>
            <person name="Fairhead C."/>
            <person name="Ferry-Dumazet H."/>
            <person name="Groppi A."/>
            <person name="Hantraye F."/>
            <person name="Hennequin C."/>
            <person name="Jauniaux N."/>
            <person name="Joyet P."/>
            <person name="Kachouri R."/>
            <person name="Kerrest A."/>
            <person name="Koszul R."/>
            <person name="Lemaire M."/>
            <person name="Lesur I."/>
            <person name="Ma L."/>
            <person name="Muller H."/>
            <person name="Nicaud J.-M."/>
            <person name="Nikolski M."/>
            <person name="Oztas S."/>
            <person name="Ozier-Kalogeropoulos O."/>
            <person name="Pellenz S."/>
            <person name="Potier S."/>
            <person name="Richard G.-F."/>
            <person name="Straub M.-L."/>
            <person name="Suleau A."/>
            <person name="Swennen D."/>
            <person name="Tekaia F."/>
            <person name="Wesolowski-Louvel M."/>
            <person name="Westhof E."/>
            <person name="Wirth B."/>
            <person name="Zeniou-Meyer M."/>
            <person name="Zivanovic Y."/>
            <person name="Bolotin-Fukuhara M."/>
            <person name="Thierry A."/>
            <person name="Bouchier C."/>
            <person name="Caudron B."/>
            <person name="Scarpelli C."/>
            <person name="Gaillardin C."/>
            <person name="Weissenbach J."/>
            <person name="Wincker P."/>
            <person name="Souciet J.-L."/>
        </authorList>
    </citation>
    <scope>NUCLEOTIDE SEQUENCE [LARGE SCALE GENOMIC DNA]</scope>
    <source>
        <strain>ATCC 8585 / CBS 2359 / DSM 70799 / NBRC 1267 / NRRL Y-1140 / WM37</strain>
    </source>
</reference>
<organism>
    <name type="scientific">Kluyveromyces lactis (strain ATCC 8585 / CBS 2359 / DSM 70799 / NBRC 1267 / NRRL Y-1140 / WM37)</name>
    <name type="common">Yeast</name>
    <name type="synonym">Candida sphaerica</name>
    <dbReference type="NCBI Taxonomy" id="284590"/>
    <lineage>
        <taxon>Eukaryota</taxon>
        <taxon>Fungi</taxon>
        <taxon>Dikarya</taxon>
        <taxon>Ascomycota</taxon>
        <taxon>Saccharomycotina</taxon>
        <taxon>Saccharomycetes</taxon>
        <taxon>Saccharomycetales</taxon>
        <taxon>Saccharomycetaceae</taxon>
        <taxon>Kluyveromyces</taxon>
    </lineage>
</organism>
<evidence type="ECO:0000250" key="1"/>
<evidence type="ECO:0000255" key="2"/>
<evidence type="ECO:0000305" key="3"/>
<gene>
    <name type="primary">COA3</name>
    <name type="ordered locus">KLLA0F01771g</name>
</gene>
<accession>Q6CLM9</accession>
<comment type="function">
    <text evidence="1">Required for assembly of cytochrome c oxidase (complex IV).</text>
</comment>
<comment type="subunit">
    <text evidence="1">Component of 250-400 kDa complexes called cytochrome oxidase assembly intermediates or COA complexes.</text>
</comment>
<comment type="subcellular location">
    <subcellularLocation>
        <location>Mitochondrion inner membrane</location>
        <topology>Single-pass membrane protein</topology>
    </subcellularLocation>
</comment>
<comment type="similarity">
    <text evidence="3">Belongs to the COA3 family.</text>
</comment>
<sequence>MLEPSPYQDHKTWKMTPAMIRARQPFFKKNLMGLVILLGVTGTIYTYTYKMLNKDSDFADVPIPPIDEKELEQLKKEYELEKIRRAQK</sequence>
<proteinExistence type="inferred from homology"/>
<dbReference type="EMBL" id="CR382126">
    <property type="protein sequence ID" value="CAG97867.1"/>
    <property type="molecule type" value="Genomic_DNA"/>
</dbReference>
<dbReference type="RefSeq" id="XP_455160.1">
    <property type="nucleotide sequence ID" value="XM_455160.1"/>
</dbReference>
<dbReference type="SMR" id="Q6CLM9"/>
<dbReference type="FunCoup" id="Q6CLM9">
    <property type="interactions" value="37"/>
</dbReference>
<dbReference type="STRING" id="284590.Q6CLM9"/>
<dbReference type="PaxDb" id="284590-Q6CLM9"/>
<dbReference type="KEGG" id="kla:KLLA0_F01771g"/>
<dbReference type="eggNOG" id="ENOG502S440">
    <property type="taxonomic scope" value="Eukaryota"/>
</dbReference>
<dbReference type="HOGENOM" id="CLU_153999_0_0_1"/>
<dbReference type="InParanoid" id="Q6CLM9"/>
<dbReference type="OMA" id="WKMTPAM"/>
<dbReference type="Proteomes" id="UP000000598">
    <property type="component" value="Chromosome F"/>
</dbReference>
<dbReference type="GO" id="GO:0005743">
    <property type="term" value="C:mitochondrial inner membrane"/>
    <property type="evidence" value="ECO:0007669"/>
    <property type="project" value="UniProtKB-SubCell"/>
</dbReference>
<dbReference type="GO" id="GO:0033617">
    <property type="term" value="P:mitochondrial cytochrome c oxidase assembly"/>
    <property type="evidence" value="ECO:0007669"/>
    <property type="project" value="InterPro"/>
</dbReference>
<dbReference type="InterPro" id="IPR041752">
    <property type="entry name" value="Coa3"/>
</dbReference>
<dbReference type="PANTHER" id="PTHR15642:SF3">
    <property type="entry name" value="CYTOCHROME C OXIDASE ASSEMBLY FACTOR 3 HOMOLOG, MITOCHONDRIAL"/>
    <property type="match status" value="1"/>
</dbReference>
<dbReference type="PANTHER" id="PTHR15642">
    <property type="entry name" value="CYTOCHROME C OXIDASE ASSEMBLY FACTOR 3, MITOCHONDRIAL"/>
    <property type="match status" value="1"/>
</dbReference>
<keyword id="KW-0472">Membrane</keyword>
<keyword id="KW-0496">Mitochondrion</keyword>
<keyword id="KW-0999">Mitochondrion inner membrane</keyword>
<keyword id="KW-1185">Reference proteome</keyword>
<keyword id="KW-0812">Transmembrane</keyword>
<keyword id="KW-1133">Transmembrane helix</keyword>
<feature type="chain" id="PRO_0000405441" description="Cytochrome c oxidase assembly factor 3, mitochondrial">
    <location>
        <begin position="1"/>
        <end position="88"/>
    </location>
</feature>
<feature type="topological domain" description="Mitochondrial matrix" evidence="1">
    <location>
        <begin position="1"/>
        <end position="30"/>
    </location>
</feature>
<feature type="transmembrane region" description="Helical" evidence="2">
    <location>
        <begin position="31"/>
        <end position="49"/>
    </location>
</feature>
<feature type="topological domain" description="Mitochondrial intermembrane" evidence="1">
    <location>
        <begin position="50"/>
        <end position="88"/>
    </location>
</feature>
<name>COA3_KLULA</name>
<protein>
    <recommendedName>
        <fullName>Cytochrome c oxidase assembly factor 3, mitochondrial</fullName>
    </recommendedName>
</protein>